<comment type="PTM">
    <text evidence="1">The N-terminus is cleaved by ribosomal processing cysteine protease Prp.</text>
</comment>
<comment type="similarity">
    <text evidence="2">Belongs to the bacterial ribosomal protein bL27 family.</text>
</comment>
<name>RL27_GEOKA</name>
<sequence length="96" mass="10596">MLRLDLQFFASKKGVGSTKNGRDSIAKRLGAKRADGQFVTSGSILYRQRGTKVHPGLNVGRGGDDTLYAKIDGIVRFERLGRDRKRVSVYPVSQEA</sequence>
<reference key="1">
    <citation type="journal article" date="2004" name="Nucleic Acids Res.">
        <title>Thermoadaptation trait revealed by the genome sequence of thermophilic Geobacillus kaustophilus.</title>
        <authorList>
            <person name="Takami H."/>
            <person name="Takaki Y."/>
            <person name="Chee G.-J."/>
            <person name="Nishi S."/>
            <person name="Shimamura S."/>
            <person name="Suzuki H."/>
            <person name="Matsui S."/>
            <person name="Uchiyama I."/>
        </authorList>
    </citation>
    <scope>NUCLEOTIDE SEQUENCE [LARGE SCALE GENOMIC DNA]</scope>
    <source>
        <strain>HTA426</strain>
    </source>
</reference>
<accession>Q5KWP3</accession>
<gene>
    <name evidence="2" type="primary">rpmA</name>
    <name type="ordered locus">GK2608</name>
</gene>
<dbReference type="EMBL" id="BA000043">
    <property type="protein sequence ID" value="BAD76893.1"/>
    <property type="molecule type" value="Genomic_DNA"/>
</dbReference>
<dbReference type="RefSeq" id="WP_011232084.1">
    <property type="nucleotide sequence ID" value="NC_006510.1"/>
</dbReference>
<dbReference type="SMR" id="Q5KWP3"/>
<dbReference type="STRING" id="235909.GK2608"/>
<dbReference type="GeneID" id="32064510"/>
<dbReference type="KEGG" id="gka:GK2608"/>
<dbReference type="eggNOG" id="COG0211">
    <property type="taxonomic scope" value="Bacteria"/>
</dbReference>
<dbReference type="HOGENOM" id="CLU_095424_4_0_9"/>
<dbReference type="Proteomes" id="UP000001172">
    <property type="component" value="Chromosome"/>
</dbReference>
<dbReference type="GO" id="GO:0022625">
    <property type="term" value="C:cytosolic large ribosomal subunit"/>
    <property type="evidence" value="ECO:0007669"/>
    <property type="project" value="TreeGrafter"/>
</dbReference>
<dbReference type="GO" id="GO:0003735">
    <property type="term" value="F:structural constituent of ribosome"/>
    <property type="evidence" value="ECO:0007669"/>
    <property type="project" value="InterPro"/>
</dbReference>
<dbReference type="GO" id="GO:0006412">
    <property type="term" value="P:translation"/>
    <property type="evidence" value="ECO:0007669"/>
    <property type="project" value="UniProtKB-UniRule"/>
</dbReference>
<dbReference type="FunFam" id="2.40.50.100:FF:000004">
    <property type="entry name" value="50S ribosomal protein L27"/>
    <property type="match status" value="1"/>
</dbReference>
<dbReference type="Gene3D" id="2.40.50.100">
    <property type="match status" value="1"/>
</dbReference>
<dbReference type="HAMAP" id="MF_00539">
    <property type="entry name" value="Ribosomal_bL27"/>
    <property type="match status" value="1"/>
</dbReference>
<dbReference type="InterPro" id="IPR001684">
    <property type="entry name" value="Ribosomal_bL27"/>
</dbReference>
<dbReference type="InterPro" id="IPR018261">
    <property type="entry name" value="Ribosomal_bL27_CS"/>
</dbReference>
<dbReference type="NCBIfam" id="TIGR00062">
    <property type="entry name" value="L27"/>
    <property type="match status" value="1"/>
</dbReference>
<dbReference type="PANTHER" id="PTHR15893:SF0">
    <property type="entry name" value="LARGE RIBOSOMAL SUBUNIT PROTEIN BL27M"/>
    <property type="match status" value="1"/>
</dbReference>
<dbReference type="PANTHER" id="PTHR15893">
    <property type="entry name" value="RIBOSOMAL PROTEIN L27"/>
    <property type="match status" value="1"/>
</dbReference>
<dbReference type="Pfam" id="PF01016">
    <property type="entry name" value="Ribosomal_L27"/>
    <property type="match status" value="1"/>
</dbReference>
<dbReference type="PRINTS" id="PR00063">
    <property type="entry name" value="RIBOSOMALL27"/>
</dbReference>
<dbReference type="SUPFAM" id="SSF110324">
    <property type="entry name" value="Ribosomal L27 protein-like"/>
    <property type="match status" value="1"/>
</dbReference>
<dbReference type="PROSITE" id="PS00831">
    <property type="entry name" value="RIBOSOMAL_L27"/>
    <property type="match status" value="1"/>
</dbReference>
<proteinExistence type="inferred from homology"/>
<organism>
    <name type="scientific">Geobacillus kaustophilus (strain HTA426)</name>
    <dbReference type="NCBI Taxonomy" id="235909"/>
    <lineage>
        <taxon>Bacteria</taxon>
        <taxon>Bacillati</taxon>
        <taxon>Bacillota</taxon>
        <taxon>Bacilli</taxon>
        <taxon>Bacillales</taxon>
        <taxon>Anoxybacillaceae</taxon>
        <taxon>Geobacillus</taxon>
        <taxon>Geobacillus thermoleovorans group</taxon>
    </lineage>
</organism>
<evidence type="ECO:0000250" key="1">
    <source>
        <dbReference type="UniProtKB" id="Q2FXT0"/>
    </source>
</evidence>
<evidence type="ECO:0000255" key="2">
    <source>
        <dbReference type="HAMAP-Rule" id="MF_00539"/>
    </source>
</evidence>
<evidence type="ECO:0000305" key="3"/>
<feature type="propeptide" id="PRO_0000459897" evidence="1">
    <location>
        <begin position="1"/>
        <end position="9"/>
    </location>
</feature>
<feature type="chain" id="PRO_0000181092" description="Large ribosomal subunit protein bL27">
    <location>
        <begin position="10"/>
        <end position="96"/>
    </location>
</feature>
<protein>
    <recommendedName>
        <fullName evidence="2">Large ribosomal subunit protein bL27</fullName>
    </recommendedName>
    <alternativeName>
        <fullName evidence="3">50S ribosomal protein L27</fullName>
    </alternativeName>
</protein>
<keyword id="KW-1185">Reference proteome</keyword>
<keyword id="KW-0687">Ribonucleoprotein</keyword>
<keyword id="KW-0689">Ribosomal protein</keyword>